<gene>
    <name evidence="1" type="primary">rnfA</name>
    <name type="ordered locus">PC1_2025</name>
</gene>
<dbReference type="EC" id="7.-.-.-" evidence="1"/>
<dbReference type="EMBL" id="CP001657">
    <property type="protein sequence ID" value="ACT13066.1"/>
    <property type="molecule type" value="Genomic_DNA"/>
</dbReference>
<dbReference type="SMR" id="C6DH17"/>
<dbReference type="STRING" id="561230.PC1_2025"/>
<dbReference type="KEGG" id="pct:PC1_2025"/>
<dbReference type="eggNOG" id="COG4657">
    <property type="taxonomic scope" value="Bacteria"/>
</dbReference>
<dbReference type="HOGENOM" id="CLU_095255_1_0_6"/>
<dbReference type="OrthoDB" id="9803631at2"/>
<dbReference type="Proteomes" id="UP000002736">
    <property type="component" value="Chromosome"/>
</dbReference>
<dbReference type="GO" id="GO:0005886">
    <property type="term" value="C:plasma membrane"/>
    <property type="evidence" value="ECO:0007669"/>
    <property type="project" value="UniProtKB-SubCell"/>
</dbReference>
<dbReference type="GO" id="GO:0022900">
    <property type="term" value="P:electron transport chain"/>
    <property type="evidence" value="ECO:0007669"/>
    <property type="project" value="UniProtKB-UniRule"/>
</dbReference>
<dbReference type="HAMAP" id="MF_00459">
    <property type="entry name" value="RsxA_RnfA"/>
    <property type="match status" value="1"/>
</dbReference>
<dbReference type="InterPro" id="IPR011293">
    <property type="entry name" value="Ion_transpt_RnfA/RsxA"/>
</dbReference>
<dbReference type="InterPro" id="IPR003667">
    <property type="entry name" value="NqrDE/RnfAE"/>
</dbReference>
<dbReference type="InterPro" id="IPR050133">
    <property type="entry name" value="NqrDE/RnfAE_oxidrdctase"/>
</dbReference>
<dbReference type="NCBIfam" id="NF003481">
    <property type="entry name" value="PRK05151.1"/>
    <property type="match status" value="1"/>
</dbReference>
<dbReference type="NCBIfam" id="TIGR01943">
    <property type="entry name" value="rnfA"/>
    <property type="match status" value="1"/>
</dbReference>
<dbReference type="PANTHER" id="PTHR30335">
    <property type="entry name" value="INTEGRAL MEMBRANE PROTEIN OF SOXR-REDUCING COMPLEX"/>
    <property type="match status" value="1"/>
</dbReference>
<dbReference type="PANTHER" id="PTHR30335:SF0">
    <property type="entry name" value="ION-TRANSLOCATING OXIDOREDUCTASE COMPLEX SUBUNIT A"/>
    <property type="match status" value="1"/>
</dbReference>
<dbReference type="Pfam" id="PF02508">
    <property type="entry name" value="Rnf-Nqr"/>
    <property type="match status" value="1"/>
</dbReference>
<dbReference type="PIRSF" id="PIRSF006102">
    <property type="entry name" value="NQR_DE"/>
    <property type="match status" value="1"/>
</dbReference>
<keyword id="KW-0997">Cell inner membrane</keyword>
<keyword id="KW-1003">Cell membrane</keyword>
<keyword id="KW-0249">Electron transport</keyword>
<keyword id="KW-0472">Membrane</keyword>
<keyword id="KW-1278">Translocase</keyword>
<keyword id="KW-0812">Transmembrane</keyword>
<keyword id="KW-1133">Transmembrane helix</keyword>
<keyword id="KW-0813">Transport</keyword>
<feature type="chain" id="PRO_1000206286" description="Ion-translocating oxidoreductase complex subunit A">
    <location>
        <begin position="1"/>
        <end position="193"/>
    </location>
</feature>
<feature type="transmembrane region" description="Helical" evidence="1">
    <location>
        <begin position="5"/>
        <end position="25"/>
    </location>
</feature>
<feature type="transmembrane region" description="Helical" evidence="1">
    <location>
        <begin position="39"/>
        <end position="59"/>
    </location>
</feature>
<feature type="transmembrane region" description="Helical" evidence="1">
    <location>
        <begin position="62"/>
        <end position="82"/>
    </location>
</feature>
<feature type="transmembrane region" description="Helical" evidence="1">
    <location>
        <begin position="102"/>
        <end position="122"/>
    </location>
</feature>
<feature type="transmembrane region" description="Helical" evidence="1">
    <location>
        <begin position="134"/>
        <end position="154"/>
    </location>
</feature>
<feature type="transmembrane region" description="Helical" evidence="1">
    <location>
        <begin position="171"/>
        <end position="191"/>
    </location>
</feature>
<reference key="1">
    <citation type="submission" date="2009-07" db="EMBL/GenBank/DDBJ databases">
        <title>Complete sequence of Pectobacterium carotovorum subsp. carotovorum PC1.</title>
        <authorList>
            <consortium name="US DOE Joint Genome Institute"/>
            <person name="Lucas S."/>
            <person name="Copeland A."/>
            <person name="Lapidus A."/>
            <person name="Glavina del Rio T."/>
            <person name="Tice H."/>
            <person name="Bruce D."/>
            <person name="Goodwin L."/>
            <person name="Pitluck S."/>
            <person name="Munk A.C."/>
            <person name="Brettin T."/>
            <person name="Detter J.C."/>
            <person name="Han C."/>
            <person name="Tapia R."/>
            <person name="Larimer F."/>
            <person name="Land M."/>
            <person name="Hauser L."/>
            <person name="Kyrpides N."/>
            <person name="Mikhailova N."/>
            <person name="Balakrishnan V."/>
            <person name="Glasner J."/>
            <person name="Perna N.T."/>
        </authorList>
    </citation>
    <scope>NUCLEOTIDE SEQUENCE [LARGE SCALE GENOMIC DNA]</scope>
    <source>
        <strain>PC1</strain>
    </source>
</reference>
<comment type="function">
    <text evidence="1">Part of a membrane-bound complex that couples electron transfer with translocation of ions across the membrane.</text>
</comment>
<comment type="subunit">
    <text evidence="1">The complex is composed of six subunits: RnfA, RnfB, RnfC, RnfD, RnfE and RnfG.</text>
</comment>
<comment type="subcellular location">
    <subcellularLocation>
        <location evidence="1">Cell inner membrane</location>
        <topology evidence="1">Multi-pass membrane protein</topology>
    </subcellularLocation>
</comment>
<comment type="similarity">
    <text evidence="1">Belongs to the NqrDE/RnfAE family.</text>
</comment>
<accession>C6DH17</accession>
<sequence>MTEYALLFVSILLVNNFVLVKFLGLCPFMGVSKKLETAIGMGMATTFVMTVGSMFSWLVNEFILVPLDILYLRTMAFILVLAVVVQFSEMFVRKVSPELYRLLGIFLPLITTNCAVLGVVLLNINLSHGFLKSTIYGFGGAAGFSLVMVLFAAIRERLAVSDIPAPFRGSSIALITAGLMSLAFMGFTGLVKF</sequence>
<evidence type="ECO:0000255" key="1">
    <source>
        <dbReference type="HAMAP-Rule" id="MF_00459"/>
    </source>
</evidence>
<proteinExistence type="inferred from homology"/>
<protein>
    <recommendedName>
        <fullName evidence="1">Ion-translocating oxidoreductase complex subunit A</fullName>
        <ecNumber evidence="1">7.-.-.-</ecNumber>
    </recommendedName>
    <alternativeName>
        <fullName evidence="1">Rnf electron transport complex subunit A</fullName>
    </alternativeName>
</protein>
<organism>
    <name type="scientific">Pectobacterium carotovorum subsp. carotovorum (strain PC1)</name>
    <dbReference type="NCBI Taxonomy" id="561230"/>
    <lineage>
        <taxon>Bacteria</taxon>
        <taxon>Pseudomonadati</taxon>
        <taxon>Pseudomonadota</taxon>
        <taxon>Gammaproteobacteria</taxon>
        <taxon>Enterobacterales</taxon>
        <taxon>Pectobacteriaceae</taxon>
        <taxon>Pectobacterium</taxon>
    </lineage>
</organism>
<name>RNFA_PECCP</name>